<comment type="function">
    <text evidence="1">Part of the high-affinity ATP-driven potassium transport (or Kdp) system, which catalyzes the hydrolysis of ATP coupled with the electrogenic transport of potassium into the cytoplasm. This subunit is responsible for energy coupling to the transport system and for the release of the potassium ions to the cytoplasm.</text>
</comment>
<comment type="catalytic activity">
    <reaction evidence="1">
        <text>K(+)(out) + ATP + H2O = K(+)(in) + ADP + phosphate + H(+)</text>
        <dbReference type="Rhea" id="RHEA:16777"/>
        <dbReference type="ChEBI" id="CHEBI:15377"/>
        <dbReference type="ChEBI" id="CHEBI:15378"/>
        <dbReference type="ChEBI" id="CHEBI:29103"/>
        <dbReference type="ChEBI" id="CHEBI:30616"/>
        <dbReference type="ChEBI" id="CHEBI:43474"/>
        <dbReference type="ChEBI" id="CHEBI:456216"/>
        <dbReference type="EC" id="7.2.2.6"/>
    </reaction>
    <physiologicalReaction direction="left-to-right" evidence="1">
        <dbReference type="Rhea" id="RHEA:16778"/>
    </physiologicalReaction>
</comment>
<comment type="subunit">
    <text evidence="1">The system is composed of three essential subunits: KdpA, KdpB and KdpC.</text>
</comment>
<comment type="subcellular location">
    <subcellularLocation>
        <location evidence="1">Cell inner membrane</location>
        <topology evidence="1">Multi-pass membrane protein</topology>
    </subcellularLocation>
</comment>
<comment type="similarity">
    <text evidence="1">Belongs to the cation transport ATPase (P-type) (TC 3.A.3) family. Type IA subfamily.</text>
</comment>
<keyword id="KW-0067">ATP-binding</keyword>
<keyword id="KW-0997">Cell inner membrane</keyword>
<keyword id="KW-1003">Cell membrane</keyword>
<keyword id="KW-0406">Ion transport</keyword>
<keyword id="KW-0460">Magnesium</keyword>
<keyword id="KW-0472">Membrane</keyword>
<keyword id="KW-0479">Metal-binding</keyword>
<keyword id="KW-0547">Nucleotide-binding</keyword>
<keyword id="KW-0597">Phosphoprotein</keyword>
<keyword id="KW-0630">Potassium</keyword>
<keyword id="KW-0633">Potassium transport</keyword>
<keyword id="KW-1278">Translocase</keyword>
<keyword id="KW-0812">Transmembrane</keyword>
<keyword id="KW-1133">Transmembrane helix</keyword>
<keyword id="KW-0813">Transport</keyword>
<sequence>MTHKQRAIFEPALVRTALLDAVKKLDPRVQWRNPVMFVVYLGSWLTTLIWLDILSGHTTGSAMFTGSIALWLWFTVLFANMAEALAEGRSKAQAASLRGVKKTSWAKKLSEARVDAPQEKVSADSLRKGDLVLIEAGDTVPCDGEVLEGGASVDESAITGESAPVIRESGGDFSSVTGGTRVLSDWLVVECRVNPGETFLDRMIAMVEGAKRRKTPNEVALTILLVALTIVFLLATATLYPFSVFSVEASQAGSPVTITVLVALLVCLIPTTIGGLLSAIGVAGMSRMLGANVIATSGRAVEAAGDVDVLLLDKTGTITLGNRQASEFLPAPGVTEQQLADAAQLSSLADETPEGRSIVVLAKQRFNLRERDLHSLNATFIPFSAQTRMSGVNVQERMIRKGAVDAIRRHVESNQGHFPPAVDDLVASVARTGGTPLVVAEGSRVLGVVALKDIVKGGIKERFAELRKMGIKTVMITGDNRLTAAAIAAEAGVDDFLAEATPEAKLALIRQYQAEGRLVAMTGDGTNDAPALAQADVAVAMNSGTQAAKEAGNMVDLDSNPTKLIEVVHIGKQMLMTRGSLTTFSIANDVAKYFAIIPAAFAATYPQLNALNIMQLHSPSSAILSAVIFNALVIVFLIPLALKGVSYKAMSAAALLRRNLWIYGLGGLLVPFVGIKLIDLLLTALNMG</sequence>
<evidence type="ECO:0000255" key="1">
    <source>
        <dbReference type="HAMAP-Rule" id="MF_00285"/>
    </source>
</evidence>
<proteinExistence type="inferred from homology"/>
<dbReference type="EC" id="7.2.2.6" evidence="1"/>
<dbReference type="EMBL" id="CP000901">
    <property type="protein sequence ID" value="ABX85766.1"/>
    <property type="molecule type" value="Genomic_DNA"/>
</dbReference>
<dbReference type="RefSeq" id="WP_002209651.1">
    <property type="nucleotide sequence ID" value="NZ_CP009935.1"/>
</dbReference>
<dbReference type="SMR" id="A9R3X3"/>
<dbReference type="GeneID" id="57976002"/>
<dbReference type="KEGG" id="ypg:YpAngola_A3581"/>
<dbReference type="PATRIC" id="fig|349746.12.peg.279"/>
<dbReference type="GO" id="GO:0005886">
    <property type="term" value="C:plasma membrane"/>
    <property type="evidence" value="ECO:0007669"/>
    <property type="project" value="UniProtKB-SubCell"/>
</dbReference>
<dbReference type="GO" id="GO:0005524">
    <property type="term" value="F:ATP binding"/>
    <property type="evidence" value="ECO:0007669"/>
    <property type="project" value="UniProtKB-UniRule"/>
</dbReference>
<dbReference type="GO" id="GO:0016887">
    <property type="term" value="F:ATP hydrolysis activity"/>
    <property type="evidence" value="ECO:0007669"/>
    <property type="project" value="InterPro"/>
</dbReference>
<dbReference type="GO" id="GO:0000287">
    <property type="term" value="F:magnesium ion binding"/>
    <property type="evidence" value="ECO:0007669"/>
    <property type="project" value="UniProtKB-UniRule"/>
</dbReference>
<dbReference type="GO" id="GO:0008556">
    <property type="term" value="F:P-type potassium transmembrane transporter activity"/>
    <property type="evidence" value="ECO:0007669"/>
    <property type="project" value="UniProtKB-UniRule"/>
</dbReference>
<dbReference type="CDD" id="cd02078">
    <property type="entry name" value="P-type_ATPase_K"/>
    <property type="match status" value="1"/>
</dbReference>
<dbReference type="FunFam" id="2.70.150.10:FF:000010">
    <property type="entry name" value="Potassium-transporting ATPase ATP-binding subunit"/>
    <property type="match status" value="1"/>
</dbReference>
<dbReference type="FunFam" id="3.40.1110.10:FF:000007">
    <property type="entry name" value="Potassium-transporting ATPase ATP-binding subunit"/>
    <property type="match status" value="1"/>
</dbReference>
<dbReference type="Gene3D" id="3.40.1110.10">
    <property type="entry name" value="Calcium-transporting ATPase, cytoplasmic domain N"/>
    <property type="match status" value="1"/>
</dbReference>
<dbReference type="Gene3D" id="2.70.150.10">
    <property type="entry name" value="Calcium-transporting ATPase, cytoplasmic transduction domain A"/>
    <property type="match status" value="1"/>
</dbReference>
<dbReference type="Gene3D" id="3.40.50.1000">
    <property type="entry name" value="HAD superfamily/HAD-like"/>
    <property type="match status" value="1"/>
</dbReference>
<dbReference type="HAMAP" id="MF_00285">
    <property type="entry name" value="KdpB"/>
    <property type="match status" value="1"/>
</dbReference>
<dbReference type="InterPro" id="IPR023299">
    <property type="entry name" value="ATPase_P-typ_cyto_dom_N"/>
</dbReference>
<dbReference type="InterPro" id="IPR018303">
    <property type="entry name" value="ATPase_P-typ_P_site"/>
</dbReference>
<dbReference type="InterPro" id="IPR023298">
    <property type="entry name" value="ATPase_P-typ_TM_dom_sf"/>
</dbReference>
<dbReference type="InterPro" id="IPR008250">
    <property type="entry name" value="ATPase_P-typ_transduc_dom_A_sf"/>
</dbReference>
<dbReference type="InterPro" id="IPR036412">
    <property type="entry name" value="HAD-like_sf"/>
</dbReference>
<dbReference type="InterPro" id="IPR023214">
    <property type="entry name" value="HAD_sf"/>
</dbReference>
<dbReference type="InterPro" id="IPR006391">
    <property type="entry name" value="P-type_ATPase_bsu_IA"/>
</dbReference>
<dbReference type="InterPro" id="IPR001757">
    <property type="entry name" value="P_typ_ATPase"/>
</dbReference>
<dbReference type="InterPro" id="IPR044492">
    <property type="entry name" value="P_typ_ATPase_HD_dom"/>
</dbReference>
<dbReference type="NCBIfam" id="TIGR01494">
    <property type="entry name" value="ATPase_P-type"/>
    <property type="match status" value="2"/>
</dbReference>
<dbReference type="NCBIfam" id="TIGR01497">
    <property type="entry name" value="kdpB"/>
    <property type="match status" value="1"/>
</dbReference>
<dbReference type="PANTHER" id="PTHR43743">
    <property type="entry name" value="POTASSIUM-TRANSPORTING ATPASE ATP-BINDING SUBUNIT"/>
    <property type="match status" value="1"/>
</dbReference>
<dbReference type="PANTHER" id="PTHR43743:SF1">
    <property type="entry name" value="POTASSIUM-TRANSPORTING ATPASE ATP-BINDING SUBUNIT"/>
    <property type="match status" value="1"/>
</dbReference>
<dbReference type="Pfam" id="PF00122">
    <property type="entry name" value="E1-E2_ATPase"/>
    <property type="match status" value="1"/>
</dbReference>
<dbReference type="Pfam" id="PF00702">
    <property type="entry name" value="Hydrolase"/>
    <property type="match status" value="1"/>
</dbReference>
<dbReference type="PRINTS" id="PR00119">
    <property type="entry name" value="CATATPASE"/>
</dbReference>
<dbReference type="SFLD" id="SFLDG00002">
    <property type="entry name" value="C1.7:_P-type_atpase_like"/>
    <property type="match status" value="1"/>
</dbReference>
<dbReference type="SFLD" id="SFLDF00027">
    <property type="entry name" value="p-type_atpase"/>
    <property type="match status" value="1"/>
</dbReference>
<dbReference type="SUPFAM" id="SSF81653">
    <property type="entry name" value="Calcium ATPase, transduction domain A"/>
    <property type="match status" value="1"/>
</dbReference>
<dbReference type="SUPFAM" id="SSF81665">
    <property type="entry name" value="Calcium ATPase, transmembrane domain M"/>
    <property type="match status" value="1"/>
</dbReference>
<dbReference type="SUPFAM" id="SSF56784">
    <property type="entry name" value="HAD-like"/>
    <property type="match status" value="1"/>
</dbReference>
<dbReference type="SUPFAM" id="SSF81660">
    <property type="entry name" value="Metal cation-transporting ATPase, ATP-binding domain N"/>
    <property type="match status" value="1"/>
</dbReference>
<dbReference type="PROSITE" id="PS00154">
    <property type="entry name" value="ATPASE_E1_E2"/>
    <property type="match status" value="1"/>
</dbReference>
<organism>
    <name type="scientific">Yersinia pestis bv. Antiqua (strain Angola)</name>
    <dbReference type="NCBI Taxonomy" id="349746"/>
    <lineage>
        <taxon>Bacteria</taxon>
        <taxon>Pseudomonadati</taxon>
        <taxon>Pseudomonadota</taxon>
        <taxon>Gammaproteobacteria</taxon>
        <taxon>Enterobacterales</taxon>
        <taxon>Yersiniaceae</taxon>
        <taxon>Yersinia</taxon>
    </lineage>
</organism>
<gene>
    <name evidence="1" type="primary">kdpB</name>
    <name type="ordered locus">YpAngola_A3581</name>
</gene>
<reference key="1">
    <citation type="journal article" date="2010" name="J. Bacteriol.">
        <title>Genome sequence of the deep-rooted Yersinia pestis strain Angola reveals new insights into the evolution and pangenome of the plague bacterium.</title>
        <authorList>
            <person name="Eppinger M."/>
            <person name="Worsham P.L."/>
            <person name="Nikolich M.P."/>
            <person name="Riley D.R."/>
            <person name="Sebastian Y."/>
            <person name="Mou S."/>
            <person name="Achtman M."/>
            <person name="Lindler L.E."/>
            <person name="Ravel J."/>
        </authorList>
    </citation>
    <scope>NUCLEOTIDE SEQUENCE [LARGE SCALE GENOMIC DNA]</scope>
    <source>
        <strain>Angola</strain>
    </source>
</reference>
<name>KDPB_YERPG</name>
<feature type="chain" id="PRO_1000114967" description="Potassium-transporting ATPase ATP-binding subunit">
    <location>
        <begin position="1"/>
        <end position="688"/>
    </location>
</feature>
<feature type="transmembrane region" description="Helical" evidence="1">
    <location>
        <begin position="34"/>
        <end position="54"/>
    </location>
</feature>
<feature type="transmembrane region" description="Helical" evidence="1">
    <location>
        <begin position="62"/>
        <end position="82"/>
    </location>
</feature>
<feature type="transmembrane region" description="Helical" evidence="1">
    <location>
        <begin position="219"/>
        <end position="239"/>
    </location>
</feature>
<feature type="transmembrane region" description="Helical" evidence="1">
    <location>
        <begin position="260"/>
        <end position="280"/>
    </location>
</feature>
<feature type="transmembrane region" description="Helical" evidence="1">
    <location>
        <begin position="594"/>
        <end position="614"/>
    </location>
</feature>
<feature type="transmembrane region" description="Helical" evidence="1">
    <location>
        <begin position="622"/>
        <end position="642"/>
    </location>
</feature>
<feature type="transmembrane region" description="Helical" evidence="1">
    <location>
        <begin position="662"/>
        <end position="682"/>
    </location>
</feature>
<feature type="active site" description="4-aspartylphosphate intermediate" evidence="1">
    <location>
        <position position="313"/>
    </location>
</feature>
<feature type="binding site" evidence="1">
    <location>
        <position position="350"/>
    </location>
    <ligand>
        <name>ATP</name>
        <dbReference type="ChEBI" id="CHEBI:30616"/>
    </ligand>
</feature>
<feature type="binding site" evidence="1">
    <location>
        <position position="354"/>
    </location>
    <ligand>
        <name>ATP</name>
        <dbReference type="ChEBI" id="CHEBI:30616"/>
    </ligand>
</feature>
<feature type="binding site" evidence="1">
    <location>
        <begin position="383"/>
        <end position="390"/>
    </location>
    <ligand>
        <name>ATP</name>
        <dbReference type="ChEBI" id="CHEBI:30616"/>
    </ligand>
</feature>
<feature type="binding site" evidence="1">
    <location>
        <position position="401"/>
    </location>
    <ligand>
        <name>ATP</name>
        <dbReference type="ChEBI" id="CHEBI:30616"/>
    </ligand>
</feature>
<feature type="binding site" evidence="1">
    <location>
        <position position="524"/>
    </location>
    <ligand>
        <name>Mg(2+)</name>
        <dbReference type="ChEBI" id="CHEBI:18420"/>
    </ligand>
</feature>
<feature type="binding site" evidence="1">
    <location>
        <position position="528"/>
    </location>
    <ligand>
        <name>Mg(2+)</name>
        <dbReference type="ChEBI" id="CHEBI:18420"/>
    </ligand>
</feature>
<accession>A9R3X3</accession>
<protein>
    <recommendedName>
        <fullName evidence="1">Potassium-transporting ATPase ATP-binding subunit</fullName>
        <ecNumber evidence="1">7.2.2.6</ecNumber>
    </recommendedName>
    <alternativeName>
        <fullName evidence="1">ATP phosphohydrolase [potassium-transporting] B chain</fullName>
    </alternativeName>
    <alternativeName>
        <fullName evidence="1">Potassium-binding and translocating subunit B</fullName>
    </alternativeName>
    <alternativeName>
        <fullName evidence="1">Potassium-translocating ATPase B chain</fullName>
    </alternativeName>
</protein>